<accession>Q3JD89</accession>
<protein>
    <recommendedName>
        <fullName evidence="1">Protein nucleotidyltransferase YdiU</fullName>
        <ecNumber evidence="1">2.7.7.-</ecNumber>
    </recommendedName>
    <alternativeName>
        <fullName evidence="1">Protein adenylyltransferase YdiU</fullName>
        <ecNumber evidence="1">2.7.7.108</ecNumber>
    </alternativeName>
    <alternativeName>
        <fullName evidence="1">Protein uridylyltransferase YdiU</fullName>
        <ecNumber evidence="1">2.7.7.-</ecNumber>
    </alternativeName>
</protein>
<gene>
    <name evidence="1" type="primary">ydiU</name>
    <name evidence="1" type="synonym">selO</name>
    <name type="ordered locus">Noc_0691</name>
</gene>
<comment type="function">
    <text evidence="1">Nucleotidyltransferase involved in the post-translational modification of proteins. It can catalyze the addition of adenosine monophosphate (AMP) or uridine monophosphate (UMP) to a protein, resulting in modifications known as AMPylation and UMPylation.</text>
</comment>
<comment type="catalytic activity">
    <reaction evidence="1">
        <text>L-seryl-[protein] + ATP = 3-O-(5'-adenylyl)-L-seryl-[protein] + diphosphate</text>
        <dbReference type="Rhea" id="RHEA:58120"/>
        <dbReference type="Rhea" id="RHEA-COMP:9863"/>
        <dbReference type="Rhea" id="RHEA-COMP:15073"/>
        <dbReference type="ChEBI" id="CHEBI:29999"/>
        <dbReference type="ChEBI" id="CHEBI:30616"/>
        <dbReference type="ChEBI" id="CHEBI:33019"/>
        <dbReference type="ChEBI" id="CHEBI:142516"/>
        <dbReference type="EC" id="2.7.7.108"/>
    </reaction>
</comment>
<comment type="catalytic activity">
    <reaction evidence="1">
        <text>L-threonyl-[protein] + ATP = 3-O-(5'-adenylyl)-L-threonyl-[protein] + diphosphate</text>
        <dbReference type="Rhea" id="RHEA:54292"/>
        <dbReference type="Rhea" id="RHEA-COMP:11060"/>
        <dbReference type="Rhea" id="RHEA-COMP:13847"/>
        <dbReference type="ChEBI" id="CHEBI:30013"/>
        <dbReference type="ChEBI" id="CHEBI:30616"/>
        <dbReference type="ChEBI" id="CHEBI:33019"/>
        <dbReference type="ChEBI" id="CHEBI:138113"/>
        <dbReference type="EC" id="2.7.7.108"/>
    </reaction>
</comment>
<comment type="catalytic activity">
    <reaction evidence="1">
        <text>L-tyrosyl-[protein] + ATP = O-(5'-adenylyl)-L-tyrosyl-[protein] + diphosphate</text>
        <dbReference type="Rhea" id="RHEA:54288"/>
        <dbReference type="Rhea" id="RHEA-COMP:10136"/>
        <dbReference type="Rhea" id="RHEA-COMP:13846"/>
        <dbReference type="ChEBI" id="CHEBI:30616"/>
        <dbReference type="ChEBI" id="CHEBI:33019"/>
        <dbReference type="ChEBI" id="CHEBI:46858"/>
        <dbReference type="ChEBI" id="CHEBI:83624"/>
        <dbReference type="EC" id="2.7.7.108"/>
    </reaction>
</comment>
<comment type="catalytic activity">
    <reaction evidence="1">
        <text>L-histidyl-[protein] + UTP = N(tele)-(5'-uridylyl)-L-histidyl-[protein] + diphosphate</text>
        <dbReference type="Rhea" id="RHEA:83891"/>
        <dbReference type="Rhea" id="RHEA-COMP:9745"/>
        <dbReference type="Rhea" id="RHEA-COMP:20239"/>
        <dbReference type="ChEBI" id="CHEBI:29979"/>
        <dbReference type="ChEBI" id="CHEBI:33019"/>
        <dbReference type="ChEBI" id="CHEBI:46398"/>
        <dbReference type="ChEBI" id="CHEBI:233474"/>
    </reaction>
</comment>
<comment type="catalytic activity">
    <reaction evidence="1">
        <text>L-seryl-[protein] + UTP = O-(5'-uridylyl)-L-seryl-[protein] + diphosphate</text>
        <dbReference type="Rhea" id="RHEA:64604"/>
        <dbReference type="Rhea" id="RHEA-COMP:9863"/>
        <dbReference type="Rhea" id="RHEA-COMP:16635"/>
        <dbReference type="ChEBI" id="CHEBI:29999"/>
        <dbReference type="ChEBI" id="CHEBI:33019"/>
        <dbReference type="ChEBI" id="CHEBI:46398"/>
        <dbReference type="ChEBI" id="CHEBI:156051"/>
    </reaction>
</comment>
<comment type="catalytic activity">
    <reaction evidence="1">
        <text>L-tyrosyl-[protein] + UTP = O-(5'-uridylyl)-L-tyrosyl-[protein] + diphosphate</text>
        <dbReference type="Rhea" id="RHEA:83887"/>
        <dbReference type="Rhea" id="RHEA-COMP:10136"/>
        <dbReference type="Rhea" id="RHEA-COMP:20238"/>
        <dbReference type="ChEBI" id="CHEBI:33019"/>
        <dbReference type="ChEBI" id="CHEBI:46398"/>
        <dbReference type="ChEBI" id="CHEBI:46858"/>
        <dbReference type="ChEBI" id="CHEBI:90602"/>
    </reaction>
</comment>
<comment type="cofactor">
    <cofactor evidence="1">
        <name>Mg(2+)</name>
        <dbReference type="ChEBI" id="CHEBI:18420"/>
    </cofactor>
    <cofactor evidence="1">
        <name>Mn(2+)</name>
        <dbReference type="ChEBI" id="CHEBI:29035"/>
    </cofactor>
</comment>
<comment type="similarity">
    <text evidence="1">Belongs to the SELO family.</text>
</comment>
<comment type="sequence caution" evidence="3">
    <conflict type="erroneous initiation">
        <sequence resource="EMBL-CDS" id="ABA57207"/>
    </conflict>
</comment>
<sequence>MPSSTAMKHQDIGWHFDNTYAQLPGHFYTKLHPVPVHEPRLVIVNNALAEELGLNFKASSEDELAQLFSGNQLPEGAEPLAQAYAGHQFGHFTYLGDGRAHLIGEHLTPDGKRVDIQFKGSGQTPYARRGDGRAALGPMLREYIISEAMHALGIPTTRSLAIATTGESVYRETVLQGAILTRVASSHLRVGTFEYLAAQEDKAGLKQLTDYAIQRHYPEIIDSDTPYLELLKAVMACQIKLITEWLRVGFIHGVMNTDNMAVSCQTIDYGPCAFMDNYDPNTVFSSIDHMGRYAYANQPRIAQWNLARFAEAILPLLHENIEKAAAMAEEAIQSFKALFQQEWLAMMRRKLGLFGEEKEDMEFITGLLQWMQRSHADYTNTFRDLMDEHFPEEPHYQDQEFKHWYDRWQQRLEHNTKPFPSSLCLMGATNPVVIPRNHRVEAALNAVEQNADFSKLHELLDVLSEPYKDKEKYTEFKNPPAPKERVSQTFCGT</sequence>
<organism>
    <name type="scientific">Nitrosococcus oceani (strain ATCC 19707 / BCRC 17464 / JCM 30415 / NCIMB 11848 / C-107)</name>
    <dbReference type="NCBI Taxonomy" id="323261"/>
    <lineage>
        <taxon>Bacteria</taxon>
        <taxon>Pseudomonadati</taxon>
        <taxon>Pseudomonadota</taxon>
        <taxon>Gammaproteobacteria</taxon>
        <taxon>Chromatiales</taxon>
        <taxon>Chromatiaceae</taxon>
        <taxon>Nitrosococcus</taxon>
    </lineage>
</organism>
<keyword id="KW-0067">ATP-binding</keyword>
<keyword id="KW-0460">Magnesium</keyword>
<keyword id="KW-0464">Manganese</keyword>
<keyword id="KW-0479">Metal-binding</keyword>
<keyword id="KW-0547">Nucleotide-binding</keyword>
<keyword id="KW-0548">Nucleotidyltransferase</keyword>
<keyword id="KW-1185">Reference proteome</keyword>
<keyword id="KW-0808">Transferase</keyword>
<evidence type="ECO:0000255" key="1">
    <source>
        <dbReference type="HAMAP-Rule" id="MF_00692"/>
    </source>
</evidence>
<evidence type="ECO:0000256" key="2">
    <source>
        <dbReference type="SAM" id="MobiDB-lite"/>
    </source>
</evidence>
<evidence type="ECO:0000305" key="3"/>
<reference key="1">
    <citation type="journal article" date="2006" name="Appl. Environ. Microbiol.">
        <title>Complete genome sequence of the marine, chemolithoautotrophic, ammonia-oxidizing bacterium Nitrosococcus oceani ATCC 19707.</title>
        <authorList>
            <person name="Klotz M.G."/>
            <person name="Arp D.J."/>
            <person name="Chain P.S.G."/>
            <person name="El-Sheikh A.F."/>
            <person name="Hauser L.J."/>
            <person name="Hommes N.G."/>
            <person name="Larimer F.W."/>
            <person name="Malfatti S.A."/>
            <person name="Norton J.M."/>
            <person name="Poret-Peterson A.T."/>
            <person name="Vergez L.M."/>
            <person name="Ward B.B."/>
        </authorList>
    </citation>
    <scope>NUCLEOTIDE SEQUENCE [LARGE SCALE GENOMIC DNA]</scope>
    <source>
        <strain>ATCC 19707 / BCRC 17464 / JCM 30415 / NCIMB 11848 / C-107</strain>
    </source>
</reference>
<feature type="chain" id="PRO_0000271838" description="Protein nucleotidyltransferase YdiU">
    <location>
        <begin position="1"/>
        <end position="493"/>
    </location>
</feature>
<feature type="region of interest" description="Disordered" evidence="2">
    <location>
        <begin position="471"/>
        <end position="493"/>
    </location>
</feature>
<feature type="active site" description="Proton acceptor" evidence="1">
    <location>
        <position position="258"/>
    </location>
</feature>
<feature type="binding site" evidence="1">
    <location>
        <position position="96"/>
    </location>
    <ligand>
        <name>ATP</name>
        <dbReference type="ChEBI" id="CHEBI:30616"/>
    </ligand>
</feature>
<feature type="binding site" evidence="1">
    <location>
        <position position="98"/>
    </location>
    <ligand>
        <name>ATP</name>
        <dbReference type="ChEBI" id="CHEBI:30616"/>
    </ligand>
</feature>
<feature type="binding site" evidence="1">
    <location>
        <position position="99"/>
    </location>
    <ligand>
        <name>ATP</name>
        <dbReference type="ChEBI" id="CHEBI:30616"/>
    </ligand>
</feature>
<feature type="binding site" evidence="1">
    <location>
        <position position="119"/>
    </location>
    <ligand>
        <name>ATP</name>
        <dbReference type="ChEBI" id="CHEBI:30616"/>
    </ligand>
</feature>
<feature type="binding site" evidence="1">
    <location>
        <position position="131"/>
    </location>
    <ligand>
        <name>ATP</name>
        <dbReference type="ChEBI" id="CHEBI:30616"/>
    </ligand>
</feature>
<feature type="binding site" evidence="1">
    <location>
        <position position="132"/>
    </location>
    <ligand>
        <name>ATP</name>
        <dbReference type="ChEBI" id="CHEBI:30616"/>
    </ligand>
</feature>
<feature type="binding site" evidence="1">
    <location>
        <position position="182"/>
    </location>
    <ligand>
        <name>ATP</name>
        <dbReference type="ChEBI" id="CHEBI:30616"/>
    </ligand>
</feature>
<feature type="binding site" evidence="1">
    <location>
        <position position="189"/>
    </location>
    <ligand>
        <name>ATP</name>
        <dbReference type="ChEBI" id="CHEBI:30616"/>
    </ligand>
</feature>
<feature type="binding site" evidence="1">
    <location>
        <position position="259"/>
    </location>
    <ligand>
        <name>Mg(2+)</name>
        <dbReference type="ChEBI" id="CHEBI:18420"/>
    </ligand>
</feature>
<feature type="binding site" evidence="1">
    <location>
        <position position="268"/>
    </location>
    <ligand>
        <name>ATP</name>
        <dbReference type="ChEBI" id="CHEBI:30616"/>
    </ligand>
</feature>
<feature type="binding site" evidence="1">
    <location>
        <position position="268"/>
    </location>
    <ligand>
        <name>Mg(2+)</name>
        <dbReference type="ChEBI" id="CHEBI:18420"/>
    </ligand>
</feature>
<proteinExistence type="inferred from homology"/>
<name>SELO_NITOC</name>
<dbReference type="EC" id="2.7.7.-" evidence="1"/>
<dbReference type="EC" id="2.7.7.108" evidence="1"/>
<dbReference type="EMBL" id="CP000127">
    <property type="protein sequence ID" value="ABA57207.1"/>
    <property type="status" value="ALT_INIT"/>
    <property type="molecule type" value="Genomic_DNA"/>
</dbReference>
<dbReference type="RefSeq" id="WP_186809261.1">
    <property type="nucleotide sequence ID" value="NC_007484.1"/>
</dbReference>
<dbReference type="SMR" id="Q3JD89"/>
<dbReference type="FunCoup" id="Q3JD89">
    <property type="interactions" value="410"/>
</dbReference>
<dbReference type="STRING" id="323261.Noc_0691"/>
<dbReference type="KEGG" id="noc:Noc_0691"/>
<dbReference type="eggNOG" id="COG0397">
    <property type="taxonomic scope" value="Bacteria"/>
</dbReference>
<dbReference type="HOGENOM" id="CLU_010245_4_0_6"/>
<dbReference type="InParanoid" id="Q3JD89"/>
<dbReference type="Proteomes" id="UP000006838">
    <property type="component" value="Chromosome"/>
</dbReference>
<dbReference type="GO" id="GO:0070733">
    <property type="term" value="F:AMPylase activity"/>
    <property type="evidence" value="ECO:0007669"/>
    <property type="project" value="RHEA"/>
</dbReference>
<dbReference type="GO" id="GO:0005524">
    <property type="term" value="F:ATP binding"/>
    <property type="evidence" value="ECO:0007669"/>
    <property type="project" value="UniProtKB-UniRule"/>
</dbReference>
<dbReference type="GO" id="GO:0000287">
    <property type="term" value="F:magnesium ion binding"/>
    <property type="evidence" value="ECO:0007669"/>
    <property type="project" value="UniProtKB-UniRule"/>
</dbReference>
<dbReference type="HAMAP" id="MF_00692">
    <property type="entry name" value="YdiU_SelO"/>
    <property type="match status" value="1"/>
</dbReference>
<dbReference type="InterPro" id="IPR003846">
    <property type="entry name" value="SelO"/>
</dbReference>
<dbReference type="NCBIfam" id="NF000658">
    <property type="entry name" value="PRK00029.1"/>
    <property type="match status" value="1"/>
</dbReference>
<dbReference type="PANTHER" id="PTHR12153:SF15">
    <property type="entry name" value="PROTEIN ADENYLYLTRANSFERASE SELO, MITOCHONDRIAL"/>
    <property type="match status" value="1"/>
</dbReference>
<dbReference type="PANTHER" id="PTHR12153">
    <property type="entry name" value="SELENOPROTEIN O"/>
    <property type="match status" value="1"/>
</dbReference>
<dbReference type="Pfam" id="PF02696">
    <property type="entry name" value="SelO"/>
    <property type="match status" value="1"/>
</dbReference>